<protein>
    <recommendedName>
        <fullName evidence="1">Pyridoxine 5'-phosphate synthase</fullName>
        <shortName evidence="1">PNP synthase</shortName>
        <ecNumber evidence="1">2.6.99.2</ecNumber>
    </recommendedName>
</protein>
<keyword id="KW-0963">Cytoplasm</keyword>
<keyword id="KW-0664">Pyridoxine biosynthesis</keyword>
<keyword id="KW-1185">Reference proteome</keyword>
<keyword id="KW-0808">Transferase</keyword>
<proteinExistence type="inferred from homology"/>
<feature type="chain" id="PRO_0000190126" description="Pyridoxine 5'-phosphate synthase">
    <location>
        <begin position="1"/>
        <end position="263"/>
    </location>
</feature>
<feature type="active site" description="Proton acceptor" evidence="1">
    <location>
        <position position="51"/>
    </location>
</feature>
<feature type="active site" description="Proton acceptor" evidence="1">
    <location>
        <position position="78"/>
    </location>
</feature>
<feature type="active site" description="Proton donor" evidence="1">
    <location>
        <position position="199"/>
    </location>
</feature>
<feature type="binding site" evidence="1">
    <location>
        <position position="15"/>
    </location>
    <ligand>
        <name>3-amino-2-oxopropyl phosphate</name>
        <dbReference type="ChEBI" id="CHEBI:57279"/>
    </ligand>
</feature>
<feature type="binding site" evidence="1">
    <location>
        <begin position="17"/>
        <end position="18"/>
    </location>
    <ligand>
        <name>1-deoxy-D-xylulose 5-phosphate</name>
        <dbReference type="ChEBI" id="CHEBI:57792"/>
    </ligand>
</feature>
<feature type="binding site" evidence="1">
    <location>
        <position position="26"/>
    </location>
    <ligand>
        <name>3-amino-2-oxopropyl phosphate</name>
        <dbReference type="ChEBI" id="CHEBI:57279"/>
    </ligand>
</feature>
<feature type="binding site" evidence="1">
    <location>
        <position position="53"/>
    </location>
    <ligand>
        <name>1-deoxy-D-xylulose 5-phosphate</name>
        <dbReference type="ChEBI" id="CHEBI:57792"/>
    </ligand>
</feature>
<feature type="binding site" evidence="1">
    <location>
        <position position="58"/>
    </location>
    <ligand>
        <name>1-deoxy-D-xylulose 5-phosphate</name>
        <dbReference type="ChEBI" id="CHEBI:57792"/>
    </ligand>
</feature>
<feature type="binding site" evidence="1">
    <location>
        <position position="108"/>
    </location>
    <ligand>
        <name>1-deoxy-D-xylulose 5-phosphate</name>
        <dbReference type="ChEBI" id="CHEBI:57792"/>
    </ligand>
</feature>
<feature type="binding site" evidence="1">
    <location>
        <position position="200"/>
    </location>
    <ligand>
        <name>3-amino-2-oxopropyl phosphate</name>
        <dbReference type="ChEBI" id="CHEBI:57279"/>
    </ligand>
</feature>
<feature type="binding site" evidence="1">
    <location>
        <begin position="221"/>
        <end position="222"/>
    </location>
    <ligand>
        <name>3-amino-2-oxopropyl phosphate</name>
        <dbReference type="ChEBI" id="CHEBI:57279"/>
    </ligand>
</feature>
<feature type="site" description="Transition state stabilizer" evidence="1">
    <location>
        <position position="159"/>
    </location>
</feature>
<comment type="function">
    <text evidence="1">Catalyzes the complicated ring closure reaction between the two acyclic compounds 1-deoxy-D-xylulose-5-phosphate (DXP) and 3-amino-2-oxopropyl phosphate (1-amino-acetone-3-phosphate or AAP) to form pyridoxine 5'-phosphate (PNP) and inorganic phosphate.</text>
</comment>
<comment type="catalytic activity">
    <reaction evidence="1">
        <text>3-amino-2-oxopropyl phosphate + 1-deoxy-D-xylulose 5-phosphate = pyridoxine 5'-phosphate + phosphate + 2 H2O + H(+)</text>
        <dbReference type="Rhea" id="RHEA:15265"/>
        <dbReference type="ChEBI" id="CHEBI:15377"/>
        <dbReference type="ChEBI" id="CHEBI:15378"/>
        <dbReference type="ChEBI" id="CHEBI:43474"/>
        <dbReference type="ChEBI" id="CHEBI:57279"/>
        <dbReference type="ChEBI" id="CHEBI:57792"/>
        <dbReference type="ChEBI" id="CHEBI:58589"/>
        <dbReference type="EC" id="2.6.99.2"/>
    </reaction>
</comment>
<comment type="pathway">
    <text evidence="1">Cofactor biosynthesis; pyridoxine 5'-phosphate biosynthesis; pyridoxine 5'-phosphate from D-erythrose 4-phosphate: step 5/5.</text>
</comment>
<comment type="subunit">
    <text evidence="1">Homooctamer; tetramer of dimers.</text>
</comment>
<comment type="subcellular location">
    <subcellularLocation>
        <location evidence="1">Cytoplasm</location>
    </subcellularLocation>
</comment>
<comment type="similarity">
    <text evidence="1">Belongs to the PNP synthase family.</text>
</comment>
<dbReference type="EC" id="2.6.99.2" evidence="1"/>
<dbReference type="EMBL" id="AL646052">
    <property type="protein sequence ID" value="CAD14768.1"/>
    <property type="molecule type" value="Genomic_DNA"/>
</dbReference>
<dbReference type="RefSeq" id="WP_011001016.1">
    <property type="nucleotide sequence ID" value="NC_003295.1"/>
</dbReference>
<dbReference type="SMR" id="Q8Y0H8"/>
<dbReference type="STRING" id="267608.RSc1066"/>
<dbReference type="EnsemblBacteria" id="CAD14768">
    <property type="protein sequence ID" value="CAD14768"/>
    <property type="gene ID" value="RSc1066"/>
</dbReference>
<dbReference type="KEGG" id="rso:RSc1066"/>
<dbReference type="eggNOG" id="COG0854">
    <property type="taxonomic scope" value="Bacteria"/>
</dbReference>
<dbReference type="HOGENOM" id="CLU_074563_0_0_4"/>
<dbReference type="UniPathway" id="UPA00244">
    <property type="reaction ID" value="UER00313"/>
</dbReference>
<dbReference type="Proteomes" id="UP000001436">
    <property type="component" value="Chromosome"/>
</dbReference>
<dbReference type="GO" id="GO:0005829">
    <property type="term" value="C:cytosol"/>
    <property type="evidence" value="ECO:0007669"/>
    <property type="project" value="TreeGrafter"/>
</dbReference>
<dbReference type="GO" id="GO:0033856">
    <property type="term" value="F:pyridoxine 5'-phosphate synthase activity"/>
    <property type="evidence" value="ECO:0007669"/>
    <property type="project" value="UniProtKB-EC"/>
</dbReference>
<dbReference type="GO" id="GO:0008615">
    <property type="term" value="P:pyridoxine biosynthetic process"/>
    <property type="evidence" value="ECO:0007669"/>
    <property type="project" value="UniProtKB-UniRule"/>
</dbReference>
<dbReference type="CDD" id="cd00003">
    <property type="entry name" value="PNPsynthase"/>
    <property type="match status" value="1"/>
</dbReference>
<dbReference type="FunFam" id="3.20.20.70:FF:000042">
    <property type="entry name" value="Pyridoxine 5'-phosphate synthase"/>
    <property type="match status" value="1"/>
</dbReference>
<dbReference type="Gene3D" id="3.20.20.70">
    <property type="entry name" value="Aldolase class I"/>
    <property type="match status" value="1"/>
</dbReference>
<dbReference type="HAMAP" id="MF_00279">
    <property type="entry name" value="PdxJ"/>
    <property type="match status" value="1"/>
</dbReference>
<dbReference type="InterPro" id="IPR013785">
    <property type="entry name" value="Aldolase_TIM"/>
</dbReference>
<dbReference type="InterPro" id="IPR004569">
    <property type="entry name" value="PyrdxlP_synth_PdxJ"/>
</dbReference>
<dbReference type="InterPro" id="IPR036130">
    <property type="entry name" value="Pyridoxine-5'_phos_synth"/>
</dbReference>
<dbReference type="NCBIfam" id="TIGR00559">
    <property type="entry name" value="pdxJ"/>
    <property type="match status" value="1"/>
</dbReference>
<dbReference type="NCBIfam" id="NF003623">
    <property type="entry name" value="PRK05265.1-1"/>
    <property type="match status" value="1"/>
</dbReference>
<dbReference type="NCBIfam" id="NF003624">
    <property type="entry name" value="PRK05265.1-2"/>
    <property type="match status" value="1"/>
</dbReference>
<dbReference type="NCBIfam" id="NF003625">
    <property type="entry name" value="PRK05265.1-3"/>
    <property type="match status" value="1"/>
</dbReference>
<dbReference type="NCBIfam" id="NF003627">
    <property type="entry name" value="PRK05265.1-5"/>
    <property type="match status" value="1"/>
</dbReference>
<dbReference type="PANTHER" id="PTHR30456">
    <property type="entry name" value="PYRIDOXINE 5'-PHOSPHATE SYNTHASE"/>
    <property type="match status" value="1"/>
</dbReference>
<dbReference type="PANTHER" id="PTHR30456:SF0">
    <property type="entry name" value="PYRIDOXINE 5'-PHOSPHATE SYNTHASE"/>
    <property type="match status" value="1"/>
</dbReference>
<dbReference type="Pfam" id="PF03740">
    <property type="entry name" value="PdxJ"/>
    <property type="match status" value="1"/>
</dbReference>
<dbReference type="SUPFAM" id="SSF63892">
    <property type="entry name" value="Pyridoxine 5'-phosphate synthase"/>
    <property type="match status" value="1"/>
</dbReference>
<organism>
    <name type="scientific">Ralstonia nicotianae (strain ATCC BAA-1114 / GMI1000)</name>
    <name type="common">Ralstonia solanacearum</name>
    <dbReference type="NCBI Taxonomy" id="267608"/>
    <lineage>
        <taxon>Bacteria</taxon>
        <taxon>Pseudomonadati</taxon>
        <taxon>Pseudomonadota</taxon>
        <taxon>Betaproteobacteria</taxon>
        <taxon>Burkholderiales</taxon>
        <taxon>Burkholderiaceae</taxon>
        <taxon>Ralstonia</taxon>
        <taxon>Ralstonia solanacearum species complex</taxon>
    </lineage>
</organism>
<reference key="1">
    <citation type="journal article" date="2002" name="Nature">
        <title>Genome sequence of the plant pathogen Ralstonia solanacearum.</title>
        <authorList>
            <person name="Salanoubat M."/>
            <person name="Genin S."/>
            <person name="Artiguenave F."/>
            <person name="Gouzy J."/>
            <person name="Mangenot S."/>
            <person name="Arlat M."/>
            <person name="Billault A."/>
            <person name="Brottier P."/>
            <person name="Camus J.-C."/>
            <person name="Cattolico L."/>
            <person name="Chandler M."/>
            <person name="Choisne N."/>
            <person name="Claudel-Renard C."/>
            <person name="Cunnac S."/>
            <person name="Demange N."/>
            <person name="Gaspin C."/>
            <person name="Lavie M."/>
            <person name="Moisan A."/>
            <person name="Robert C."/>
            <person name="Saurin W."/>
            <person name="Schiex T."/>
            <person name="Siguier P."/>
            <person name="Thebault P."/>
            <person name="Whalen M."/>
            <person name="Wincker P."/>
            <person name="Levy M."/>
            <person name="Weissenbach J."/>
            <person name="Boucher C.A."/>
        </authorList>
    </citation>
    <scope>NUCLEOTIDE SEQUENCE [LARGE SCALE GENOMIC DNA]</scope>
    <source>
        <strain>ATCC BAA-1114 / GMI1000</strain>
    </source>
</reference>
<evidence type="ECO:0000255" key="1">
    <source>
        <dbReference type="HAMAP-Rule" id="MF_00279"/>
    </source>
</evidence>
<name>PDXJ_RALN1</name>
<accession>Q8Y0H8</accession>
<gene>
    <name evidence="1" type="primary">pdxJ</name>
    <name type="ordered locus">RSc1066</name>
    <name type="ORF">RS04138</name>
</gene>
<sequence length="263" mass="27987">MIFHASPGVIDLGVNIDHVATLRNARGTTYPDPIAAALLAEEAGADLITLHLREDRRHIKDADVRALRPQLRTRMNLECAVTQEMLDIACDIGPQDVCLVPERRQEVTTEGGLDVVGGFAKVQAACQQLAGAGIRVSLFIDPDPAQIEAAAATGAPVVELHTGRYAEATDDAEVKAELVRIERAVEEGIRWGLRVNAGHGLHYTNVQPIAAMAGIHELNIGHAIVAHAVFAGWQNAVREMKAIMVAARLSATTPAAAHPGVPA</sequence>